<keyword id="KW-0028">Amino-acid biosynthesis</keyword>
<keyword id="KW-0378">Hydrolase</keyword>
<keyword id="KW-0486">Methionine biosynthesis</keyword>
<reference key="1">
    <citation type="submission" date="2007-06" db="EMBL/GenBank/DDBJ databases">
        <title>Complete sequence of chromosome of Staphylococcus aureus subsp. aureus JH1.</title>
        <authorList>
            <consortium name="US DOE Joint Genome Institute"/>
            <person name="Copeland A."/>
            <person name="Lucas S."/>
            <person name="Lapidus A."/>
            <person name="Barry K."/>
            <person name="Detter J.C."/>
            <person name="Glavina del Rio T."/>
            <person name="Hammon N."/>
            <person name="Israni S."/>
            <person name="Dalin E."/>
            <person name="Tice H."/>
            <person name="Pitluck S."/>
            <person name="Chain P."/>
            <person name="Malfatti S."/>
            <person name="Shin M."/>
            <person name="Vergez L."/>
            <person name="Schmutz J."/>
            <person name="Larimer F."/>
            <person name="Land M."/>
            <person name="Hauser L."/>
            <person name="Kyrpides N."/>
            <person name="Ivanova N."/>
            <person name="Tomasz A."/>
            <person name="Richardson P."/>
        </authorList>
    </citation>
    <scope>NUCLEOTIDE SEQUENCE [LARGE SCALE GENOMIC DNA]</scope>
    <source>
        <strain>JH1</strain>
    </source>
</reference>
<evidence type="ECO:0000255" key="1">
    <source>
        <dbReference type="HAMAP-Rule" id="MF_01684"/>
    </source>
</evidence>
<proteinExistence type="inferred from homology"/>
<feature type="chain" id="PRO_0000359364" description="5'-methylthioadenosine/S-adenosylhomocysteine nucleosidase">
    <location>
        <begin position="1"/>
        <end position="228"/>
    </location>
</feature>
<feature type="active site" description="Proton acceptor" evidence="1">
    <location>
        <position position="11"/>
    </location>
</feature>
<feature type="active site" description="Proton donor" evidence="1">
    <location>
        <position position="196"/>
    </location>
</feature>
<feature type="binding site" evidence="1">
    <location>
        <position position="77"/>
    </location>
    <ligand>
        <name>substrate</name>
    </ligand>
</feature>
<feature type="binding site" evidence="1">
    <location>
        <position position="151"/>
    </location>
    <ligand>
        <name>substrate</name>
    </ligand>
</feature>
<feature type="binding site" evidence="1">
    <location>
        <begin position="172"/>
        <end position="173"/>
    </location>
    <ligand>
        <name>substrate</name>
    </ligand>
</feature>
<organism>
    <name type="scientific">Staphylococcus aureus (strain JH1)</name>
    <dbReference type="NCBI Taxonomy" id="359787"/>
    <lineage>
        <taxon>Bacteria</taxon>
        <taxon>Bacillati</taxon>
        <taxon>Bacillota</taxon>
        <taxon>Bacilli</taxon>
        <taxon>Bacillales</taxon>
        <taxon>Staphylococcaceae</taxon>
        <taxon>Staphylococcus</taxon>
    </lineage>
</organism>
<accession>A6U271</accession>
<dbReference type="EC" id="3.2.2.9" evidence="1"/>
<dbReference type="EMBL" id="CP000736">
    <property type="protein sequence ID" value="ABR52539.1"/>
    <property type="molecule type" value="Genomic_DNA"/>
</dbReference>
<dbReference type="SMR" id="A6U271"/>
<dbReference type="KEGG" id="sah:SaurJH1_1691"/>
<dbReference type="HOGENOM" id="CLU_031248_2_2_9"/>
<dbReference type="UniPathway" id="UPA00904">
    <property type="reaction ID" value="UER00871"/>
</dbReference>
<dbReference type="GO" id="GO:0005829">
    <property type="term" value="C:cytosol"/>
    <property type="evidence" value="ECO:0007669"/>
    <property type="project" value="TreeGrafter"/>
</dbReference>
<dbReference type="GO" id="GO:0008782">
    <property type="term" value="F:adenosylhomocysteine nucleosidase activity"/>
    <property type="evidence" value="ECO:0007669"/>
    <property type="project" value="UniProtKB-UniRule"/>
</dbReference>
<dbReference type="GO" id="GO:0008930">
    <property type="term" value="F:methylthioadenosine nucleosidase activity"/>
    <property type="evidence" value="ECO:0007669"/>
    <property type="project" value="UniProtKB-UniRule"/>
</dbReference>
<dbReference type="GO" id="GO:0019509">
    <property type="term" value="P:L-methionine salvage from methylthioadenosine"/>
    <property type="evidence" value="ECO:0007669"/>
    <property type="project" value="UniProtKB-UniRule"/>
</dbReference>
<dbReference type="GO" id="GO:0019284">
    <property type="term" value="P:L-methionine salvage from S-adenosylmethionine"/>
    <property type="evidence" value="ECO:0007669"/>
    <property type="project" value="TreeGrafter"/>
</dbReference>
<dbReference type="GO" id="GO:0009164">
    <property type="term" value="P:nucleoside catabolic process"/>
    <property type="evidence" value="ECO:0007669"/>
    <property type="project" value="InterPro"/>
</dbReference>
<dbReference type="CDD" id="cd09008">
    <property type="entry name" value="MTAN"/>
    <property type="match status" value="1"/>
</dbReference>
<dbReference type="FunFam" id="3.40.50.1580:FF:000001">
    <property type="entry name" value="MTA/SAH nucleosidase family protein"/>
    <property type="match status" value="1"/>
</dbReference>
<dbReference type="Gene3D" id="3.40.50.1580">
    <property type="entry name" value="Nucleoside phosphorylase domain"/>
    <property type="match status" value="1"/>
</dbReference>
<dbReference type="HAMAP" id="MF_01684">
    <property type="entry name" value="Salvage_MtnN"/>
    <property type="match status" value="1"/>
</dbReference>
<dbReference type="InterPro" id="IPR010049">
    <property type="entry name" value="MTA_SAH_Nsdase"/>
</dbReference>
<dbReference type="InterPro" id="IPR000845">
    <property type="entry name" value="Nucleoside_phosphorylase_d"/>
</dbReference>
<dbReference type="InterPro" id="IPR035994">
    <property type="entry name" value="Nucleoside_phosphorylase_sf"/>
</dbReference>
<dbReference type="NCBIfam" id="TIGR01704">
    <property type="entry name" value="MTA_SAH-Nsdase"/>
    <property type="match status" value="1"/>
</dbReference>
<dbReference type="NCBIfam" id="NF004079">
    <property type="entry name" value="PRK05584.1"/>
    <property type="match status" value="1"/>
</dbReference>
<dbReference type="PANTHER" id="PTHR46832">
    <property type="entry name" value="5'-METHYLTHIOADENOSINE/S-ADENOSYLHOMOCYSTEINE NUCLEOSIDASE"/>
    <property type="match status" value="1"/>
</dbReference>
<dbReference type="PANTHER" id="PTHR46832:SF1">
    <property type="entry name" value="5'-METHYLTHIOADENOSINE_S-ADENOSYLHOMOCYSTEINE NUCLEOSIDASE"/>
    <property type="match status" value="1"/>
</dbReference>
<dbReference type="Pfam" id="PF01048">
    <property type="entry name" value="PNP_UDP_1"/>
    <property type="match status" value="1"/>
</dbReference>
<dbReference type="SUPFAM" id="SSF53167">
    <property type="entry name" value="Purine and uridine phosphorylases"/>
    <property type="match status" value="1"/>
</dbReference>
<name>MTNN_STAA2</name>
<gene>
    <name evidence="1" type="primary">mtnN</name>
    <name type="ordered locus">SaurJH1_1691</name>
</gene>
<comment type="function">
    <text evidence="1">Catalyzes the irreversible cleavage of the glycosidic bond in both 5'-methylthioadenosine (MTA) and S-adenosylhomocysteine (SAH/AdoHcy) to adenine and the corresponding thioribose, 5'-methylthioribose and S-ribosylhomocysteine, respectively. Also cleaves 5'-deoxyadenosine, a toxic by-product of radical S-adenosylmethionine (SAM) enzymes, into 5-deoxyribose and adenine.</text>
</comment>
<comment type="catalytic activity">
    <reaction evidence="1">
        <text>S-adenosyl-L-homocysteine + H2O = S-(5-deoxy-D-ribos-5-yl)-L-homocysteine + adenine</text>
        <dbReference type="Rhea" id="RHEA:17805"/>
        <dbReference type="ChEBI" id="CHEBI:15377"/>
        <dbReference type="ChEBI" id="CHEBI:16708"/>
        <dbReference type="ChEBI" id="CHEBI:57856"/>
        <dbReference type="ChEBI" id="CHEBI:58195"/>
        <dbReference type="EC" id="3.2.2.9"/>
    </reaction>
</comment>
<comment type="catalytic activity">
    <reaction evidence="1">
        <text>S-methyl-5'-thioadenosine + H2O = 5-(methylsulfanyl)-D-ribose + adenine</text>
        <dbReference type="Rhea" id="RHEA:13617"/>
        <dbReference type="ChEBI" id="CHEBI:15377"/>
        <dbReference type="ChEBI" id="CHEBI:16708"/>
        <dbReference type="ChEBI" id="CHEBI:17509"/>
        <dbReference type="ChEBI" id="CHEBI:78440"/>
        <dbReference type="EC" id="3.2.2.9"/>
    </reaction>
</comment>
<comment type="catalytic activity">
    <reaction evidence="1">
        <text>5'-deoxyadenosine + H2O = 5-deoxy-D-ribose + adenine</text>
        <dbReference type="Rhea" id="RHEA:29859"/>
        <dbReference type="ChEBI" id="CHEBI:15377"/>
        <dbReference type="ChEBI" id="CHEBI:16708"/>
        <dbReference type="ChEBI" id="CHEBI:17319"/>
        <dbReference type="ChEBI" id="CHEBI:149540"/>
        <dbReference type="EC" id="3.2.2.9"/>
    </reaction>
    <physiologicalReaction direction="left-to-right" evidence="1">
        <dbReference type="Rhea" id="RHEA:29860"/>
    </physiologicalReaction>
</comment>
<comment type="pathway">
    <text evidence="1">Amino-acid biosynthesis; L-methionine biosynthesis via salvage pathway; S-methyl-5-thio-alpha-D-ribose 1-phosphate from S-methyl-5'-thioadenosine (hydrolase route): step 1/2.</text>
</comment>
<comment type="similarity">
    <text evidence="1">Belongs to the PNP/UDP phosphorylase family. MtnN subfamily.</text>
</comment>
<sequence length="228" mass="24534">MIGIIGAMEEEVTILKNKLTQLSEISVAHVKFYTGILKDREVVITQSGIGKVNAAISTTLLINKFKPDVIINTGSAGALDESLNVGDVLISDDVKYHDADATAFGYEYGQIPQMPVAFQSSKPLIEKVSQVVQQQQLTAKVGLIVSGDSFIGSVEQRQKIKKAFPNAMAVEMEATAIAQTCYQFNVPFVVVRAVSDLANGEAEMSFEAFLEKAAVSSSQTVEALVSQL</sequence>
<protein>
    <recommendedName>
        <fullName evidence="1">5'-methylthioadenosine/S-adenosylhomocysteine nucleosidase</fullName>
        <shortName evidence="1">MTA/SAH nucleosidase</shortName>
        <shortName evidence="1">MTAN</shortName>
        <ecNumber evidence="1">3.2.2.9</ecNumber>
    </recommendedName>
    <alternativeName>
        <fullName evidence="1">5'-deoxyadenosine nucleosidase</fullName>
        <shortName evidence="1">DOA nucleosidase</shortName>
        <shortName evidence="1">dAdo nucleosidase</shortName>
    </alternativeName>
    <alternativeName>
        <fullName evidence="1">5'-methylthioadenosine nucleosidase</fullName>
        <shortName evidence="1">MTA nucleosidase</shortName>
    </alternativeName>
    <alternativeName>
        <fullName evidence="1">S-adenosylhomocysteine nucleosidase</fullName>
        <shortName evidence="1">AdoHcy nucleosidase</shortName>
        <shortName evidence="1">SAH nucleosidase</shortName>
        <shortName evidence="1">SRH nucleosidase</shortName>
    </alternativeName>
</protein>